<sequence length="528" mass="59105">MGDAPSPEEKLHLITRNLQEVLGEEKLKEILKERELKVYWGTATTGKPHVAYFVPMSKIADFLKAGCEVTILFADLHAYLDNMKAPWELLELRTSYYENVIKAMLESIGVPLEKLKFIKGTDYQLSKEYTLDVYRLSSVVTQHDAKKAGAEVVKQVEHPLLSGLLYPGLQALDEEYLKVDAQFGGVDQRKIFTFAEKYLPALGYSKRVHLMNPMVPGLTGSKMSSSEEESKIDLLDRKEDVKKKLKKAFCEPGNVENNGVLSFIKHVLFPLKSEFVILRDEKWGGNKTYTVYLELEKDFAAEVVHPGDLKNSVEVALNKLLDPIREKFNTPALKKLASAAYPDPSKQKPPAKGPAKNSEPEEVIPSRLDIRVGKILSVEKHPDADSLYVEKIDVGEAEPRTVVSGLVQFVPKEELQDRLVVVLCNLKPQKMRGVDSQGMLLCASVEGVSRQVEPLDPPAGSAPGERVFVQGYEKGQPDEELKPKKKVFEKLQADFKISEECIAQWKQTNFMTKLGFVSCKSLKGGNIS</sequence>
<gene>
    <name type="primary">Yars1</name>
    <name type="synonym">Yars</name>
</gene>
<dbReference type="EC" id="6.1.1.1" evidence="1"/>
<dbReference type="EMBL" id="AK028785">
    <property type="protein sequence ID" value="BAC26120.1"/>
    <property type="molecule type" value="mRNA"/>
</dbReference>
<dbReference type="EMBL" id="AK043837">
    <property type="protein sequence ID" value="BAC31674.1"/>
    <property type="molecule type" value="mRNA"/>
</dbReference>
<dbReference type="EMBL" id="AK076634">
    <property type="protein sequence ID" value="BAC36424.1"/>
    <property type="molecule type" value="mRNA"/>
</dbReference>
<dbReference type="EMBL" id="AK139579">
    <property type="protein sequence ID" value="BAE24073.1"/>
    <property type="molecule type" value="mRNA"/>
</dbReference>
<dbReference type="EMBL" id="AK145356">
    <property type="protein sequence ID" value="BAE26384.1"/>
    <property type="molecule type" value="mRNA"/>
</dbReference>
<dbReference type="EMBL" id="AK151880">
    <property type="protein sequence ID" value="BAE30766.1"/>
    <property type="molecule type" value="mRNA"/>
</dbReference>
<dbReference type="EMBL" id="AK169708">
    <property type="protein sequence ID" value="BAE41320.1"/>
    <property type="molecule type" value="mRNA"/>
</dbReference>
<dbReference type="EMBL" id="BC013552">
    <property type="protein sequence ID" value="AAH13552.1"/>
    <property type="molecule type" value="mRNA"/>
</dbReference>
<dbReference type="EMBL" id="BC022143">
    <property type="protein sequence ID" value="AAH22143.1"/>
    <property type="molecule type" value="mRNA"/>
</dbReference>
<dbReference type="EMBL" id="BC026615">
    <property type="protein sequence ID" value="AAH26615.1"/>
    <property type="molecule type" value="mRNA"/>
</dbReference>
<dbReference type="CCDS" id="CCDS18685.2"/>
<dbReference type="RefSeq" id="NP_598912.4">
    <property type="nucleotide sequence ID" value="NM_134151.4"/>
</dbReference>
<dbReference type="SMR" id="Q91WQ3"/>
<dbReference type="BioGRID" id="223230">
    <property type="interactions" value="8"/>
</dbReference>
<dbReference type="DIP" id="DIP-61502N"/>
<dbReference type="FunCoup" id="Q91WQ3">
    <property type="interactions" value="3224"/>
</dbReference>
<dbReference type="IntAct" id="Q91WQ3">
    <property type="interactions" value="2"/>
</dbReference>
<dbReference type="STRING" id="10090.ENSMUSP00000101669"/>
<dbReference type="GlyGen" id="Q91WQ3">
    <property type="glycosylation" value="2 sites, 1 O-linked glycan (2 sites)"/>
</dbReference>
<dbReference type="iPTMnet" id="Q91WQ3"/>
<dbReference type="PhosphoSitePlus" id="Q91WQ3"/>
<dbReference type="SwissPalm" id="Q91WQ3"/>
<dbReference type="jPOST" id="Q91WQ3"/>
<dbReference type="PaxDb" id="10090-ENSMUSP00000101669"/>
<dbReference type="PeptideAtlas" id="Q91WQ3"/>
<dbReference type="ProteomicsDB" id="262990"/>
<dbReference type="Pumba" id="Q91WQ3"/>
<dbReference type="Antibodypedia" id="17005">
    <property type="antibodies" value="265 antibodies from 26 providers"/>
</dbReference>
<dbReference type="DNASU" id="107271"/>
<dbReference type="Ensembl" id="ENSMUST00000106054.4">
    <property type="protein sequence ID" value="ENSMUSP00000101669.4"/>
    <property type="gene ID" value="ENSMUSG00000028811.13"/>
</dbReference>
<dbReference type="GeneID" id="107271"/>
<dbReference type="KEGG" id="mmu:107271"/>
<dbReference type="AGR" id="MGI:2147627"/>
<dbReference type="CTD" id="8565"/>
<dbReference type="MGI" id="MGI:2147627">
    <property type="gene designation" value="Yars1"/>
</dbReference>
<dbReference type="VEuPathDB" id="HostDB:ENSMUSG00000028811"/>
<dbReference type="eggNOG" id="KOG2144">
    <property type="taxonomic scope" value="Eukaryota"/>
</dbReference>
<dbReference type="eggNOG" id="KOG2241">
    <property type="taxonomic scope" value="Eukaryota"/>
</dbReference>
<dbReference type="GeneTree" id="ENSGT00940000156949"/>
<dbReference type="InParanoid" id="Q91WQ3"/>
<dbReference type="OMA" id="RKIHMLA"/>
<dbReference type="OrthoDB" id="197206at2759"/>
<dbReference type="BioGRID-ORCS" id="107271">
    <property type="hits" value="26 hits in 79 CRISPR screens"/>
</dbReference>
<dbReference type="CD-CODE" id="CE726F99">
    <property type="entry name" value="Postsynaptic density"/>
</dbReference>
<dbReference type="ChiTaRS" id="Yars">
    <property type="organism name" value="mouse"/>
</dbReference>
<dbReference type="PRO" id="PR:Q91WQ3"/>
<dbReference type="Proteomes" id="UP000000589">
    <property type="component" value="Chromosome 4"/>
</dbReference>
<dbReference type="RNAct" id="Q91WQ3">
    <property type="molecule type" value="protein"/>
</dbReference>
<dbReference type="Bgee" id="ENSMUSG00000028811">
    <property type="expression patterns" value="Expressed in yolk sac and 262 other cell types or tissues"/>
</dbReference>
<dbReference type="ExpressionAtlas" id="Q91WQ3">
    <property type="expression patterns" value="baseline and differential"/>
</dbReference>
<dbReference type="GO" id="GO:0005829">
    <property type="term" value="C:cytosol"/>
    <property type="evidence" value="ECO:0000250"/>
    <property type="project" value="UniProtKB"/>
</dbReference>
<dbReference type="GO" id="GO:0016604">
    <property type="term" value="C:nuclear body"/>
    <property type="evidence" value="ECO:0007669"/>
    <property type="project" value="Ensembl"/>
</dbReference>
<dbReference type="GO" id="GO:0005634">
    <property type="term" value="C:nucleus"/>
    <property type="evidence" value="ECO:0000250"/>
    <property type="project" value="UniProtKB"/>
</dbReference>
<dbReference type="GO" id="GO:0005524">
    <property type="term" value="F:ATP binding"/>
    <property type="evidence" value="ECO:0007669"/>
    <property type="project" value="UniProtKB-KW"/>
</dbReference>
<dbReference type="GO" id="GO:0036094">
    <property type="term" value="F:small molecule binding"/>
    <property type="evidence" value="ECO:0000250"/>
    <property type="project" value="UniProtKB"/>
</dbReference>
<dbReference type="GO" id="GO:0000049">
    <property type="term" value="F:tRNA binding"/>
    <property type="evidence" value="ECO:0007669"/>
    <property type="project" value="UniProtKB-KW"/>
</dbReference>
<dbReference type="GO" id="GO:0004831">
    <property type="term" value="F:tyrosine-tRNA ligase activity"/>
    <property type="evidence" value="ECO:0000250"/>
    <property type="project" value="UniProtKB"/>
</dbReference>
<dbReference type="GO" id="GO:0042594">
    <property type="term" value="P:response to starvation"/>
    <property type="evidence" value="ECO:0007669"/>
    <property type="project" value="Ensembl"/>
</dbReference>
<dbReference type="GO" id="GO:0006437">
    <property type="term" value="P:tyrosyl-tRNA aminoacylation"/>
    <property type="evidence" value="ECO:0007669"/>
    <property type="project" value="Ensembl"/>
</dbReference>
<dbReference type="CDD" id="cd02799">
    <property type="entry name" value="tRNA_bind_EMAP-II_like"/>
    <property type="match status" value="1"/>
</dbReference>
<dbReference type="CDD" id="cd00805">
    <property type="entry name" value="TyrRS_core"/>
    <property type="match status" value="1"/>
</dbReference>
<dbReference type="FunFam" id="1.10.240.10:FF:000004">
    <property type="entry name" value="Tyrosine--tRNA ligase"/>
    <property type="match status" value="1"/>
</dbReference>
<dbReference type="FunFam" id="3.40.50.620:FF:000040">
    <property type="entry name" value="Tyrosine--tRNA ligase"/>
    <property type="match status" value="1"/>
</dbReference>
<dbReference type="FunFam" id="2.40.50.140:FF:000047">
    <property type="entry name" value="tyrosine--tRNA ligase, cytoplasmic isoform X2"/>
    <property type="match status" value="1"/>
</dbReference>
<dbReference type="Gene3D" id="3.40.50.620">
    <property type="entry name" value="HUPs"/>
    <property type="match status" value="1"/>
</dbReference>
<dbReference type="Gene3D" id="2.40.50.140">
    <property type="entry name" value="Nucleic acid-binding proteins"/>
    <property type="match status" value="1"/>
</dbReference>
<dbReference type="Gene3D" id="1.10.240.10">
    <property type="entry name" value="Tyrosyl-Transfer RNA Synthetase"/>
    <property type="match status" value="1"/>
</dbReference>
<dbReference type="InterPro" id="IPR002305">
    <property type="entry name" value="aa-tRNA-synth_Ic"/>
</dbReference>
<dbReference type="InterPro" id="IPR012340">
    <property type="entry name" value="NA-bd_OB-fold"/>
</dbReference>
<dbReference type="InterPro" id="IPR014729">
    <property type="entry name" value="Rossmann-like_a/b/a_fold"/>
</dbReference>
<dbReference type="InterPro" id="IPR002547">
    <property type="entry name" value="tRNA-bd_dom"/>
</dbReference>
<dbReference type="InterPro" id="IPR002307">
    <property type="entry name" value="Tyr-tRNA-ligase"/>
</dbReference>
<dbReference type="InterPro" id="IPR051270">
    <property type="entry name" value="Tyrosine-tRNA_ligase_regulator"/>
</dbReference>
<dbReference type="NCBIfam" id="NF006330">
    <property type="entry name" value="PRK08560.1"/>
    <property type="match status" value="1"/>
</dbReference>
<dbReference type="NCBIfam" id="TIGR00234">
    <property type="entry name" value="tyrS"/>
    <property type="match status" value="1"/>
</dbReference>
<dbReference type="PANTHER" id="PTHR11586">
    <property type="entry name" value="TRNA-AMINOACYLATION COFACTOR ARC1 FAMILY MEMBER"/>
    <property type="match status" value="1"/>
</dbReference>
<dbReference type="PANTHER" id="PTHR11586:SF43">
    <property type="entry name" value="TYROSINE--TRNA LIGASE, CYTOPLASMIC"/>
    <property type="match status" value="1"/>
</dbReference>
<dbReference type="Pfam" id="PF00579">
    <property type="entry name" value="tRNA-synt_1b"/>
    <property type="match status" value="1"/>
</dbReference>
<dbReference type="Pfam" id="PF01588">
    <property type="entry name" value="tRNA_bind"/>
    <property type="match status" value="1"/>
</dbReference>
<dbReference type="PRINTS" id="PR01040">
    <property type="entry name" value="TRNASYNTHTYR"/>
</dbReference>
<dbReference type="SUPFAM" id="SSF50249">
    <property type="entry name" value="Nucleic acid-binding proteins"/>
    <property type="match status" value="1"/>
</dbReference>
<dbReference type="SUPFAM" id="SSF52374">
    <property type="entry name" value="Nucleotidylyl transferase"/>
    <property type="match status" value="1"/>
</dbReference>
<dbReference type="PROSITE" id="PS50886">
    <property type="entry name" value="TRBD"/>
    <property type="match status" value="1"/>
</dbReference>
<reference key="1">
    <citation type="journal article" date="2005" name="Science">
        <title>The transcriptional landscape of the mammalian genome.</title>
        <authorList>
            <person name="Carninci P."/>
            <person name="Kasukawa T."/>
            <person name="Katayama S."/>
            <person name="Gough J."/>
            <person name="Frith M.C."/>
            <person name="Maeda N."/>
            <person name="Oyama R."/>
            <person name="Ravasi T."/>
            <person name="Lenhard B."/>
            <person name="Wells C."/>
            <person name="Kodzius R."/>
            <person name="Shimokawa K."/>
            <person name="Bajic V.B."/>
            <person name="Brenner S.E."/>
            <person name="Batalov S."/>
            <person name="Forrest A.R."/>
            <person name="Zavolan M."/>
            <person name="Davis M.J."/>
            <person name="Wilming L.G."/>
            <person name="Aidinis V."/>
            <person name="Allen J.E."/>
            <person name="Ambesi-Impiombato A."/>
            <person name="Apweiler R."/>
            <person name="Aturaliya R.N."/>
            <person name="Bailey T.L."/>
            <person name="Bansal M."/>
            <person name="Baxter L."/>
            <person name="Beisel K.W."/>
            <person name="Bersano T."/>
            <person name="Bono H."/>
            <person name="Chalk A.M."/>
            <person name="Chiu K.P."/>
            <person name="Choudhary V."/>
            <person name="Christoffels A."/>
            <person name="Clutterbuck D.R."/>
            <person name="Crowe M.L."/>
            <person name="Dalla E."/>
            <person name="Dalrymple B.P."/>
            <person name="de Bono B."/>
            <person name="Della Gatta G."/>
            <person name="di Bernardo D."/>
            <person name="Down T."/>
            <person name="Engstrom P."/>
            <person name="Fagiolini M."/>
            <person name="Faulkner G."/>
            <person name="Fletcher C.F."/>
            <person name="Fukushima T."/>
            <person name="Furuno M."/>
            <person name="Futaki S."/>
            <person name="Gariboldi M."/>
            <person name="Georgii-Hemming P."/>
            <person name="Gingeras T.R."/>
            <person name="Gojobori T."/>
            <person name="Green R.E."/>
            <person name="Gustincich S."/>
            <person name="Harbers M."/>
            <person name="Hayashi Y."/>
            <person name="Hensch T.K."/>
            <person name="Hirokawa N."/>
            <person name="Hill D."/>
            <person name="Huminiecki L."/>
            <person name="Iacono M."/>
            <person name="Ikeo K."/>
            <person name="Iwama A."/>
            <person name="Ishikawa T."/>
            <person name="Jakt M."/>
            <person name="Kanapin A."/>
            <person name="Katoh M."/>
            <person name="Kawasawa Y."/>
            <person name="Kelso J."/>
            <person name="Kitamura H."/>
            <person name="Kitano H."/>
            <person name="Kollias G."/>
            <person name="Krishnan S.P."/>
            <person name="Kruger A."/>
            <person name="Kummerfeld S.K."/>
            <person name="Kurochkin I.V."/>
            <person name="Lareau L.F."/>
            <person name="Lazarevic D."/>
            <person name="Lipovich L."/>
            <person name="Liu J."/>
            <person name="Liuni S."/>
            <person name="McWilliam S."/>
            <person name="Madan Babu M."/>
            <person name="Madera M."/>
            <person name="Marchionni L."/>
            <person name="Matsuda H."/>
            <person name="Matsuzawa S."/>
            <person name="Miki H."/>
            <person name="Mignone F."/>
            <person name="Miyake S."/>
            <person name="Morris K."/>
            <person name="Mottagui-Tabar S."/>
            <person name="Mulder N."/>
            <person name="Nakano N."/>
            <person name="Nakauchi H."/>
            <person name="Ng P."/>
            <person name="Nilsson R."/>
            <person name="Nishiguchi S."/>
            <person name="Nishikawa S."/>
            <person name="Nori F."/>
            <person name="Ohara O."/>
            <person name="Okazaki Y."/>
            <person name="Orlando V."/>
            <person name="Pang K.C."/>
            <person name="Pavan W.J."/>
            <person name="Pavesi G."/>
            <person name="Pesole G."/>
            <person name="Petrovsky N."/>
            <person name="Piazza S."/>
            <person name="Reed J."/>
            <person name="Reid J.F."/>
            <person name="Ring B.Z."/>
            <person name="Ringwald M."/>
            <person name="Rost B."/>
            <person name="Ruan Y."/>
            <person name="Salzberg S.L."/>
            <person name="Sandelin A."/>
            <person name="Schneider C."/>
            <person name="Schoenbach C."/>
            <person name="Sekiguchi K."/>
            <person name="Semple C.A."/>
            <person name="Seno S."/>
            <person name="Sessa L."/>
            <person name="Sheng Y."/>
            <person name="Shibata Y."/>
            <person name="Shimada H."/>
            <person name="Shimada K."/>
            <person name="Silva D."/>
            <person name="Sinclair B."/>
            <person name="Sperling S."/>
            <person name="Stupka E."/>
            <person name="Sugiura K."/>
            <person name="Sultana R."/>
            <person name="Takenaka Y."/>
            <person name="Taki K."/>
            <person name="Tammoja K."/>
            <person name="Tan S.L."/>
            <person name="Tang S."/>
            <person name="Taylor M.S."/>
            <person name="Tegner J."/>
            <person name="Teichmann S.A."/>
            <person name="Ueda H.R."/>
            <person name="van Nimwegen E."/>
            <person name="Verardo R."/>
            <person name="Wei C.L."/>
            <person name="Yagi K."/>
            <person name="Yamanishi H."/>
            <person name="Zabarovsky E."/>
            <person name="Zhu S."/>
            <person name="Zimmer A."/>
            <person name="Hide W."/>
            <person name="Bult C."/>
            <person name="Grimmond S.M."/>
            <person name="Teasdale R.D."/>
            <person name="Liu E.T."/>
            <person name="Brusic V."/>
            <person name="Quackenbush J."/>
            <person name="Wahlestedt C."/>
            <person name="Mattick J.S."/>
            <person name="Hume D.A."/>
            <person name="Kai C."/>
            <person name="Sasaki D."/>
            <person name="Tomaru Y."/>
            <person name="Fukuda S."/>
            <person name="Kanamori-Katayama M."/>
            <person name="Suzuki M."/>
            <person name="Aoki J."/>
            <person name="Arakawa T."/>
            <person name="Iida J."/>
            <person name="Imamura K."/>
            <person name="Itoh M."/>
            <person name="Kato T."/>
            <person name="Kawaji H."/>
            <person name="Kawagashira N."/>
            <person name="Kawashima T."/>
            <person name="Kojima M."/>
            <person name="Kondo S."/>
            <person name="Konno H."/>
            <person name="Nakano K."/>
            <person name="Ninomiya N."/>
            <person name="Nishio T."/>
            <person name="Okada M."/>
            <person name="Plessy C."/>
            <person name="Shibata K."/>
            <person name="Shiraki T."/>
            <person name="Suzuki S."/>
            <person name="Tagami M."/>
            <person name="Waki K."/>
            <person name="Watahiki A."/>
            <person name="Okamura-Oho Y."/>
            <person name="Suzuki H."/>
            <person name="Kawai J."/>
            <person name="Hayashizaki Y."/>
        </authorList>
    </citation>
    <scope>NUCLEOTIDE SEQUENCE [LARGE SCALE MRNA]</scope>
    <source>
        <strain>C57BL/6J</strain>
        <strain>NOD</strain>
        <tissue>Bone marrow</tissue>
        <tissue>Brain cortex</tissue>
        <tissue>Egg</tissue>
        <tissue>Embryo</tissue>
        <tissue>Skin</tissue>
        <tissue>Testis</tissue>
        <tissue>Thymus</tissue>
    </source>
</reference>
<reference key="2">
    <citation type="journal article" date="2004" name="Genome Res.">
        <title>The status, quality, and expansion of the NIH full-length cDNA project: the Mammalian Gene Collection (MGC).</title>
        <authorList>
            <consortium name="The MGC Project Team"/>
        </authorList>
    </citation>
    <scope>NUCLEOTIDE SEQUENCE [LARGE SCALE MRNA]</scope>
    <source>
        <tissue>Kidney</tissue>
        <tissue>Liver</tissue>
    </source>
</reference>
<reference key="3">
    <citation type="journal article" date="2010" name="Cell">
        <title>A tissue-specific atlas of mouse protein phosphorylation and expression.</title>
        <authorList>
            <person name="Huttlin E.L."/>
            <person name="Jedrychowski M.P."/>
            <person name="Elias J.E."/>
            <person name="Goswami T."/>
            <person name="Rad R."/>
            <person name="Beausoleil S.A."/>
            <person name="Villen J."/>
            <person name="Haas W."/>
            <person name="Sowa M.E."/>
            <person name="Gygi S.P."/>
        </authorList>
    </citation>
    <scope>IDENTIFICATION BY MASS SPECTROMETRY [LARGE SCALE ANALYSIS]</scope>
    <source>
        <tissue>Brain</tissue>
        <tissue>Brown adipose tissue</tissue>
        <tissue>Heart</tissue>
        <tissue>Kidney</tissue>
        <tissue>Liver</tissue>
        <tissue>Lung</tissue>
        <tissue>Pancreas</tissue>
        <tissue>Spleen</tissue>
        <tissue>Testis</tissue>
    </source>
</reference>
<reference key="4">
    <citation type="journal article" date="2015" name="Nature">
        <title>A human tRNA synthetase is a potent PARP1-activating effector target for resveratrol.</title>
        <authorList>
            <person name="Sajish M."/>
            <person name="Schimmel P."/>
        </authorList>
    </citation>
    <scope>FUNCTION</scope>
</reference>
<organism>
    <name type="scientific">Mus musculus</name>
    <name type="common">Mouse</name>
    <dbReference type="NCBI Taxonomy" id="10090"/>
    <lineage>
        <taxon>Eukaryota</taxon>
        <taxon>Metazoa</taxon>
        <taxon>Chordata</taxon>
        <taxon>Craniata</taxon>
        <taxon>Vertebrata</taxon>
        <taxon>Euteleostomi</taxon>
        <taxon>Mammalia</taxon>
        <taxon>Eutheria</taxon>
        <taxon>Euarchontoglires</taxon>
        <taxon>Glires</taxon>
        <taxon>Rodentia</taxon>
        <taxon>Myomorpha</taxon>
        <taxon>Muroidea</taxon>
        <taxon>Muridae</taxon>
        <taxon>Murinae</taxon>
        <taxon>Mus</taxon>
        <taxon>Mus</taxon>
    </lineage>
</organism>
<evidence type="ECO:0000250" key="1">
    <source>
        <dbReference type="UniProtKB" id="P54577"/>
    </source>
</evidence>
<evidence type="ECO:0000255" key="2">
    <source>
        <dbReference type="PROSITE-ProRule" id="PRU00209"/>
    </source>
</evidence>
<evidence type="ECO:0000256" key="3">
    <source>
        <dbReference type="SAM" id="MobiDB-lite"/>
    </source>
</evidence>
<evidence type="ECO:0000269" key="4">
    <source>
    </source>
</evidence>
<evidence type="ECO:0000305" key="5"/>
<proteinExistence type="evidence at protein level"/>
<comment type="function">
    <text evidence="1 4">Tyrosine--tRNA ligase that catalyzes the attachment of tyrosine to tRNA(Tyr) in a two-step reaction: tyrosine is first activated by ATP to form Tyr-AMP and then transferred to the acceptor end of tRNA(Tyr) (By similarity). Also acts as a positive regulator of poly-ADP-ribosylation in the nucleus, independently of its tyrosine--tRNA ligase activity (By similarity). Activity is switched upon resveratrol-binding: resveratrol strongly inhibits the tyrosine--tRNA ligase activity and promotes relocalization to the nucleus, where YARS1 specifically stimulates the poly-ADP-ribosyltransferase activity of PARP1 (PubMed:25533949).</text>
</comment>
<comment type="catalytic activity">
    <reaction evidence="1">
        <text>tRNA(Tyr) + L-tyrosine + ATP = L-tyrosyl-tRNA(Tyr) + AMP + diphosphate + H(+)</text>
        <dbReference type="Rhea" id="RHEA:10220"/>
        <dbReference type="Rhea" id="RHEA-COMP:9706"/>
        <dbReference type="Rhea" id="RHEA-COMP:9707"/>
        <dbReference type="ChEBI" id="CHEBI:15378"/>
        <dbReference type="ChEBI" id="CHEBI:30616"/>
        <dbReference type="ChEBI" id="CHEBI:33019"/>
        <dbReference type="ChEBI" id="CHEBI:58315"/>
        <dbReference type="ChEBI" id="CHEBI:78442"/>
        <dbReference type="ChEBI" id="CHEBI:78536"/>
        <dbReference type="ChEBI" id="CHEBI:456215"/>
        <dbReference type="EC" id="6.1.1.1"/>
    </reaction>
    <physiologicalReaction direction="left-to-right" evidence="1">
        <dbReference type="Rhea" id="RHEA:10221"/>
    </physiologicalReaction>
</comment>
<comment type="activity regulation">
    <text evidence="1">Resveratrol strongly inhibits the tyrosine--tRNA ligase activity.</text>
</comment>
<comment type="subunit">
    <text evidence="1">Homodimer. Interacts (when binding to resveratrol) with PARP1; interaction stimulates the poly-ADP-ribosyltransferase activity of PARP1.</text>
</comment>
<comment type="subcellular location">
    <subcellularLocation>
        <location evidence="1">Cytoplasm</location>
    </subcellularLocation>
    <subcellularLocation>
        <location evidence="1">Nucleus</location>
    </subcellularLocation>
    <text evidence="1">Cytoplasmic in normal conditions. Resveratrol-binding in response to serum starvation promotes relocalization to the nucleus.</text>
</comment>
<comment type="domain">
    <text evidence="1">The nuclear localization signal, which mediates localization to the nucleus, is also important for interacting with tRNA(Tyr), suggesting that it is sterically blocked when tRNA(Tyr) is bound.</text>
</comment>
<comment type="similarity">
    <text evidence="5">Belongs to the class-I aminoacyl-tRNA synthetase family.</text>
</comment>
<feature type="chain" id="PRO_0000423286" description="Tyrosine--tRNA ligase, cytoplasmic">
    <location>
        <begin position="1"/>
        <end position="528"/>
    </location>
</feature>
<feature type="initiator methionine" description="Removed; alternate" evidence="1">
    <location>
        <position position="1"/>
    </location>
</feature>
<feature type="chain" id="PRO_0000055674" description="Tyrosine--tRNA ligase, cytoplasmic, N-terminally processed">
    <location>
        <begin position="2"/>
        <end position="528"/>
    </location>
</feature>
<feature type="domain" description="tRNA-binding" evidence="2">
    <location>
        <begin position="364"/>
        <end position="468"/>
    </location>
</feature>
<feature type="region of interest" description="Disordered" evidence="3">
    <location>
        <begin position="339"/>
        <end position="363"/>
    </location>
</feature>
<feature type="short sequence motif" description="'HIGH' region" evidence="1">
    <location>
        <begin position="44"/>
        <end position="52"/>
    </location>
</feature>
<feature type="short sequence motif" description="'KMSKS' region" evidence="1">
    <location>
        <begin position="222"/>
        <end position="226"/>
    </location>
</feature>
<feature type="short sequence motif" description="Nuclear localization signal" evidence="1">
    <location>
        <begin position="242"/>
        <end position="247"/>
    </location>
</feature>
<feature type="binding site" evidence="1">
    <location>
        <position position="39"/>
    </location>
    <ligand>
        <name>L-tyrosine</name>
        <dbReference type="ChEBI" id="CHEBI:58315"/>
    </ligand>
</feature>
<feature type="binding site" evidence="1">
    <location>
        <position position="39"/>
    </location>
    <ligand>
        <name>trans-resveratrol</name>
        <dbReference type="ChEBI" id="CHEBI:45713"/>
    </ligand>
</feature>
<feature type="binding site" evidence="1">
    <location>
        <position position="166"/>
    </location>
    <ligand>
        <name>L-tyrosine</name>
        <dbReference type="ChEBI" id="CHEBI:58315"/>
    </ligand>
</feature>
<feature type="binding site" evidence="1">
    <location>
        <position position="170"/>
    </location>
    <ligand>
        <name>L-tyrosine</name>
        <dbReference type="ChEBI" id="CHEBI:58315"/>
    </ligand>
</feature>
<feature type="binding site" evidence="1">
    <location>
        <position position="170"/>
    </location>
    <ligand>
        <name>trans-resveratrol</name>
        <dbReference type="ChEBI" id="CHEBI:45713"/>
    </ligand>
</feature>
<feature type="binding site" evidence="1">
    <location>
        <position position="173"/>
    </location>
    <ligand>
        <name>L-tyrosine</name>
        <dbReference type="ChEBI" id="CHEBI:58315"/>
    </ligand>
</feature>
<feature type="binding site" evidence="1">
    <location>
        <position position="173"/>
    </location>
    <ligand>
        <name>trans-resveratrol</name>
        <dbReference type="ChEBI" id="CHEBI:45713"/>
    </ligand>
</feature>
<feature type="binding site" evidence="1">
    <location>
        <position position="188"/>
    </location>
    <ligand>
        <name>L-tyrosine</name>
        <dbReference type="ChEBI" id="CHEBI:58315"/>
    </ligand>
</feature>
<feature type="modified residue" description="N-acetylmethionine" evidence="1">
    <location>
        <position position="1"/>
    </location>
</feature>
<feature type="modified residue" description="N-acetylglycine; in Tyrosine--tRNA ligase, cytoplasmic, N-terminally processed" evidence="1">
    <location>
        <position position="2"/>
    </location>
</feature>
<feature type="modified residue" description="N6-acetyllysine" evidence="1">
    <location>
        <position position="197"/>
    </location>
</feature>
<feature type="modified residue" description="Phosphoserine" evidence="1">
    <location>
        <position position="205"/>
    </location>
</feature>
<feature type="modified residue" description="N6-acetyllysine" evidence="1">
    <location>
        <position position="206"/>
    </location>
</feature>
<feature type="modified residue" description="Phosphoserine" evidence="1">
    <location>
        <position position="386"/>
    </location>
</feature>
<feature type="modified residue" description="N6-acetyllysine" evidence="1">
    <location>
        <position position="474"/>
    </location>
</feature>
<feature type="modified residue" description="N6-acetyllysine" evidence="1">
    <location>
        <position position="482"/>
    </location>
</feature>
<feature type="modified residue" description="N6-acetyllysine" evidence="1">
    <location>
        <position position="490"/>
    </location>
</feature>
<feature type="sequence conflict" description="In Ref. 1; BAC26120." evidence="5" ref="1">
    <original>L</original>
    <variation>M</variation>
    <location>
        <position position="11"/>
    </location>
</feature>
<feature type="sequence conflict" description="In Ref. 1; BAE24073." evidence="5" ref="1">
    <original>E</original>
    <variation>K</variation>
    <location>
        <position position="29"/>
    </location>
</feature>
<feature type="sequence conflict" description="In Ref. 1; BAC36424." evidence="5" ref="1">
    <original>A</original>
    <variation>S</variation>
    <location>
        <position position="195"/>
    </location>
</feature>
<feature type="sequence conflict" description="In Ref. 1; BAC36424." evidence="5" ref="1">
    <original>E</original>
    <variation>Q</variation>
    <location>
        <position position="294"/>
    </location>
</feature>
<feature type="sequence conflict" description="In Ref. 1; BAC36424." evidence="5" ref="1">
    <original>L</original>
    <variation>W</variation>
    <location>
        <position position="320"/>
    </location>
</feature>
<feature type="sequence conflict" description="In Ref. 1; BAC36424." evidence="5" ref="1">
    <original>S</original>
    <variation>R</variation>
    <location>
        <position position="377"/>
    </location>
</feature>
<name>SYYC_MOUSE</name>
<accession>Q91WQ3</accession>
<accession>Q3TEC8</accession>
<accession>Q3U9A1</accession>
<accession>Q3UTA7</accession>
<accession>Q8BVT2</accession>
<accession>Q8C183</accession>
<keyword id="KW-0007">Acetylation</keyword>
<keyword id="KW-0030">Aminoacyl-tRNA synthetase</keyword>
<keyword id="KW-0067">ATP-binding</keyword>
<keyword id="KW-0963">Cytoplasm</keyword>
<keyword id="KW-0436">Ligase</keyword>
<keyword id="KW-0547">Nucleotide-binding</keyword>
<keyword id="KW-0539">Nucleus</keyword>
<keyword id="KW-0597">Phosphoprotein</keyword>
<keyword id="KW-0648">Protein biosynthesis</keyword>
<keyword id="KW-1185">Reference proteome</keyword>
<keyword id="KW-0694">RNA-binding</keyword>
<keyword id="KW-0820">tRNA-binding</keyword>
<protein>
    <recommendedName>
        <fullName>Tyrosine--tRNA ligase, cytoplasmic</fullName>
        <ecNumber evidence="1">6.1.1.1</ecNumber>
    </recommendedName>
    <alternativeName>
        <fullName>Tyrosyl-tRNA synthetase</fullName>
        <shortName>TyrRS</shortName>
    </alternativeName>
    <component>
        <recommendedName>
            <fullName>Tyrosine--tRNA ligase, cytoplasmic, N-terminally processed</fullName>
        </recommendedName>
    </component>
</protein>